<gene>
    <name evidence="1" type="primary">nuoK</name>
    <name type="ordered locus">Noca_0530</name>
</gene>
<sequence>MNVTAYVVLSGILFTIGCVGVLIRRNAIVVFMCVELMLNASNLALVAFARQHGNLDGQIAAFFVMVVAAAEVVVGLAIIMTIFRTRRSASVDDASLLKY</sequence>
<reference key="1">
    <citation type="submission" date="2006-12" db="EMBL/GenBank/DDBJ databases">
        <title>Complete sequence of chromosome 1 of Nocardioides sp. JS614.</title>
        <authorList>
            <person name="Copeland A."/>
            <person name="Lucas S."/>
            <person name="Lapidus A."/>
            <person name="Barry K."/>
            <person name="Detter J.C."/>
            <person name="Glavina del Rio T."/>
            <person name="Hammon N."/>
            <person name="Israni S."/>
            <person name="Dalin E."/>
            <person name="Tice H."/>
            <person name="Pitluck S."/>
            <person name="Thompson L.S."/>
            <person name="Brettin T."/>
            <person name="Bruce D."/>
            <person name="Han C."/>
            <person name="Tapia R."/>
            <person name="Schmutz J."/>
            <person name="Larimer F."/>
            <person name="Land M."/>
            <person name="Hauser L."/>
            <person name="Kyrpides N."/>
            <person name="Kim E."/>
            <person name="Mattes T."/>
            <person name="Gossett J."/>
            <person name="Richardson P."/>
        </authorList>
    </citation>
    <scope>NUCLEOTIDE SEQUENCE [LARGE SCALE GENOMIC DNA]</scope>
    <source>
        <strain>ATCC BAA-499 / JS614</strain>
    </source>
</reference>
<evidence type="ECO:0000255" key="1">
    <source>
        <dbReference type="HAMAP-Rule" id="MF_01456"/>
    </source>
</evidence>
<proteinExistence type="inferred from homology"/>
<protein>
    <recommendedName>
        <fullName evidence="1">NADH-quinone oxidoreductase subunit K</fullName>
        <ecNumber evidence="1">7.1.1.-</ecNumber>
    </recommendedName>
    <alternativeName>
        <fullName evidence="1">NADH dehydrogenase I subunit K</fullName>
    </alternativeName>
    <alternativeName>
        <fullName evidence="1">NDH-1 subunit K</fullName>
    </alternativeName>
</protein>
<dbReference type="EC" id="7.1.1.-" evidence="1"/>
<dbReference type="EMBL" id="CP000509">
    <property type="protein sequence ID" value="ABL80072.1"/>
    <property type="molecule type" value="Genomic_DNA"/>
</dbReference>
<dbReference type="RefSeq" id="WP_011754022.1">
    <property type="nucleotide sequence ID" value="NC_008699.1"/>
</dbReference>
<dbReference type="SMR" id="A1SE37"/>
<dbReference type="STRING" id="196162.Noca_0530"/>
<dbReference type="KEGG" id="nca:Noca_0530"/>
<dbReference type="eggNOG" id="COG0713">
    <property type="taxonomic scope" value="Bacteria"/>
</dbReference>
<dbReference type="HOGENOM" id="CLU_144724_0_0_11"/>
<dbReference type="OrthoDB" id="9810120at2"/>
<dbReference type="Proteomes" id="UP000000640">
    <property type="component" value="Chromosome"/>
</dbReference>
<dbReference type="GO" id="GO:0030964">
    <property type="term" value="C:NADH dehydrogenase complex"/>
    <property type="evidence" value="ECO:0007669"/>
    <property type="project" value="TreeGrafter"/>
</dbReference>
<dbReference type="GO" id="GO:0005886">
    <property type="term" value="C:plasma membrane"/>
    <property type="evidence" value="ECO:0007669"/>
    <property type="project" value="UniProtKB-SubCell"/>
</dbReference>
<dbReference type="GO" id="GO:0050136">
    <property type="term" value="F:NADH:ubiquinone reductase (non-electrogenic) activity"/>
    <property type="evidence" value="ECO:0007669"/>
    <property type="project" value="UniProtKB-UniRule"/>
</dbReference>
<dbReference type="GO" id="GO:0048038">
    <property type="term" value="F:quinone binding"/>
    <property type="evidence" value="ECO:0007669"/>
    <property type="project" value="UniProtKB-KW"/>
</dbReference>
<dbReference type="GO" id="GO:0042773">
    <property type="term" value="P:ATP synthesis coupled electron transport"/>
    <property type="evidence" value="ECO:0007669"/>
    <property type="project" value="InterPro"/>
</dbReference>
<dbReference type="FunFam" id="1.10.287.3510:FF:000001">
    <property type="entry name" value="NADH-quinone oxidoreductase subunit K"/>
    <property type="match status" value="1"/>
</dbReference>
<dbReference type="Gene3D" id="1.10.287.3510">
    <property type="match status" value="1"/>
</dbReference>
<dbReference type="HAMAP" id="MF_01456">
    <property type="entry name" value="NDH1_NuoK"/>
    <property type="match status" value="1"/>
</dbReference>
<dbReference type="InterPro" id="IPR001133">
    <property type="entry name" value="NADH_UbQ_OxRdtase_chain4L/K"/>
</dbReference>
<dbReference type="InterPro" id="IPR039428">
    <property type="entry name" value="NUOK/Mnh_C1-like"/>
</dbReference>
<dbReference type="NCBIfam" id="NF004320">
    <property type="entry name" value="PRK05715.1-2"/>
    <property type="match status" value="1"/>
</dbReference>
<dbReference type="NCBIfam" id="NF004321">
    <property type="entry name" value="PRK05715.1-3"/>
    <property type="match status" value="1"/>
</dbReference>
<dbReference type="PANTHER" id="PTHR11434:SF21">
    <property type="entry name" value="NADH DEHYDROGENASE SUBUNIT 4L-RELATED"/>
    <property type="match status" value="1"/>
</dbReference>
<dbReference type="PANTHER" id="PTHR11434">
    <property type="entry name" value="NADH-UBIQUINONE OXIDOREDUCTASE SUBUNIT ND4L"/>
    <property type="match status" value="1"/>
</dbReference>
<dbReference type="Pfam" id="PF00420">
    <property type="entry name" value="Oxidored_q2"/>
    <property type="match status" value="1"/>
</dbReference>
<keyword id="KW-1003">Cell membrane</keyword>
<keyword id="KW-0472">Membrane</keyword>
<keyword id="KW-0520">NAD</keyword>
<keyword id="KW-0874">Quinone</keyword>
<keyword id="KW-1185">Reference proteome</keyword>
<keyword id="KW-1278">Translocase</keyword>
<keyword id="KW-0812">Transmembrane</keyword>
<keyword id="KW-1133">Transmembrane helix</keyword>
<keyword id="KW-0813">Transport</keyword>
<organism>
    <name type="scientific">Nocardioides sp. (strain ATCC BAA-499 / JS614)</name>
    <dbReference type="NCBI Taxonomy" id="196162"/>
    <lineage>
        <taxon>Bacteria</taxon>
        <taxon>Bacillati</taxon>
        <taxon>Actinomycetota</taxon>
        <taxon>Actinomycetes</taxon>
        <taxon>Propionibacteriales</taxon>
        <taxon>Nocardioidaceae</taxon>
        <taxon>Nocardioides</taxon>
    </lineage>
</organism>
<feature type="chain" id="PRO_0000390150" description="NADH-quinone oxidoreductase subunit K">
    <location>
        <begin position="1"/>
        <end position="99"/>
    </location>
</feature>
<feature type="transmembrane region" description="Helical" evidence="1">
    <location>
        <begin position="3"/>
        <end position="23"/>
    </location>
</feature>
<feature type="transmembrane region" description="Helical" evidence="1">
    <location>
        <begin position="28"/>
        <end position="48"/>
    </location>
</feature>
<feature type="transmembrane region" description="Helical" evidence="1">
    <location>
        <begin position="59"/>
        <end position="79"/>
    </location>
</feature>
<accession>A1SE37</accession>
<comment type="function">
    <text evidence="1">NDH-1 shuttles electrons from NADH, via FMN and iron-sulfur (Fe-S) centers, to quinones in the respiratory chain. The immediate electron acceptor for the enzyme in this species is believed to be a menaquinone. Couples the redox reaction to proton translocation (for every two electrons transferred, four hydrogen ions are translocated across the cytoplasmic membrane), and thus conserves the redox energy in a proton gradient.</text>
</comment>
<comment type="catalytic activity">
    <reaction evidence="1">
        <text>a quinone + NADH + 5 H(+)(in) = a quinol + NAD(+) + 4 H(+)(out)</text>
        <dbReference type="Rhea" id="RHEA:57888"/>
        <dbReference type="ChEBI" id="CHEBI:15378"/>
        <dbReference type="ChEBI" id="CHEBI:24646"/>
        <dbReference type="ChEBI" id="CHEBI:57540"/>
        <dbReference type="ChEBI" id="CHEBI:57945"/>
        <dbReference type="ChEBI" id="CHEBI:132124"/>
    </reaction>
</comment>
<comment type="subunit">
    <text evidence="1">NDH-1 is composed of 14 different subunits. Subunits NuoA, H, J, K, L, M, N constitute the membrane sector of the complex.</text>
</comment>
<comment type="subcellular location">
    <subcellularLocation>
        <location evidence="1">Cell membrane</location>
        <topology evidence="1">Multi-pass membrane protein</topology>
    </subcellularLocation>
</comment>
<comment type="similarity">
    <text evidence="1">Belongs to the complex I subunit 4L family.</text>
</comment>
<name>NUOK_NOCSJ</name>